<dbReference type="EMBL" id="CP000758">
    <property type="protein sequence ID" value="ABS14924.1"/>
    <property type="molecule type" value="Genomic_DNA"/>
</dbReference>
<dbReference type="RefSeq" id="WP_002964239.1">
    <property type="nucleotide sequence ID" value="NC_009667.1"/>
</dbReference>
<dbReference type="SMR" id="A6X120"/>
<dbReference type="STRING" id="439375.Oant_2208"/>
<dbReference type="GeneID" id="97533634"/>
<dbReference type="KEGG" id="oan:Oant_2208"/>
<dbReference type="eggNOG" id="COG1923">
    <property type="taxonomic scope" value="Bacteria"/>
</dbReference>
<dbReference type="HOGENOM" id="CLU_113688_0_0_5"/>
<dbReference type="Proteomes" id="UP000002301">
    <property type="component" value="Chromosome 1"/>
</dbReference>
<dbReference type="GO" id="GO:0005829">
    <property type="term" value="C:cytosol"/>
    <property type="evidence" value="ECO:0007669"/>
    <property type="project" value="TreeGrafter"/>
</dbReference>
<dbReference type="GO" id="GO:0003723">
    <property type="term" value="F:RNA binding"/>
    <property type="evidence" value="ECO:0007669"/>
    <property type="project" value="UniProtKB-UniRule"/>
</dbReference>
<dbReference type="GO" id="GO:0006355">
    <property type="term" value="P:regulation of DNA-templated transcription"/>
    <property type="evidence" value="ECO:0007669"/>
    <property type="project" value="InterPro"/>
</dbReference>
<dbReference type="GO" id="GO:0043487">
    <property type="term" value="P:regulation of RNA stability"/>
    <property type="evidence" value="ECO:0007669"/>
    <property type="project" value="TreeGrafter"/>
</dbReference>
<dbReference type="GO" id="GO:0045974">
    <property type="term" value="P:regulation of translation, ncRNA-mediated"/>
    <property type="evidence" value="ECO:0007669"/>
    <property type="project" value="TreeGrafter"/>
</dbReference>
<dbReference type="CDD" id="cd01716">
    <property type="entry name" value="Hfq"/>
    <property type="match status" value="1"/>
</dbReference>
<dbReference type="Gene3D" id="2.30.30.100">
    <property type="match status" value="1"/>
</dbReference>
<dbReference type="HAMAP" id="MF_00436">
    <property type="entry name" value="Hfq"/>
    <property type="match status" value="1"/>
</dbReference>
<dbReference type="InterPro" id="IPR005001">
    <property type="entry name" value="Hfq"/>
</dbReference>
<dbReference type="InterPro" id="IPR010920">
    <property type="entry name" value="LSM_dom_sf"/>
</dbReference>
<dbReference type="InterPro" id="IPR047575">
    <property type="entry name" value="Sm"/>
</dbReference>
<dbReference type="NCBIfam" id="TIGR02383">
    <property type="entry name" value="Hfq"/>
    <property type="match status" value="1"/>
</dbReference>
<dbReference type="NCBIfam" id="NF001602">
    <property type="entry name" value="PRK00395.1"/>
    <property type="match status" value="1"/>
</dbReference>
<dbReference type="PANTHER" id="PTHR34772">
    <property type="entry name" value="RNA-BINDING PROTEIN HFQ"/>
    <property type="match status" value="1"/>
</dbReference>
<dbReference type="PANTHER" id="PTHR34772:SF1">
    <property type="entry name" value="RNA-BINDING PROTEIN HFQ"/>
    <property type="match status" value="1"/>
</dbReference>
<dbReference type="Pfam" id="PF17209">
    <property type="entry name" value="Hfq"/>
    <property type="match status" value="1"/>
</dbReference>
<dbReference type="SUPFAM" id="SSF50182">
    <property type="entry name" value="Sm-like ribonucleoproteins"/>
    <property type="match status" value="1"/>
</dbReference>
<dbReference type="PROSITE" id="PS52002">
    <property type="entry name" value="SM"/>
    <property type="match status" value="1"/>
</dbReference>
<proteinExistence type="inferred from homology"/>
<evidence type="ECO:0000255" key="1">
    <source>
        <dbReference type="HAMAP-Rule" id="MF_00436"/>
    </source>
</evidence>
<evidence type="ECO:0000255" key="2">
    <source>
        <dbReference type="PROSITE-ProRule" id="PRU01346"/>
    </source>
</evidence>
<comment type="function">
    <text evidence="1">RNA chaperone that binds small regulatory RNA (sRNAs) and mRNAs to facilitate mRNA translational regulation in response to envelope stress, environmental stress and changes in metabolite concentrations. Also binds with high specificity to tRNAs.</text>
</comment>
<comment type="subunit">
    <text evidence="1">Homohexamer.</text>
</comment>
<comment type="similarity">
    <text evidence="1">Belongs to the Hfq family.</text>
</comment>
<reference key="1">
    <citation type="journal article" date="2011" name="J. Bacteriol.">
        <title>Genome of Ochrobactrum anthropi ATCC 49188 T, a versatile opportunistic pathogen and symbiont of several eukaryotic hosts.</title>
        <authorList>
            <person name="Chain P.S."/>
            <person name="Lang D.M."/>
            <person name="Comerci D.J."/>
            <person name="Malfatti S.A."/>
            <person name="Vergez L.M."/>
            <person name="Shin M."/>
            <person name="Ugalde R.A."/>
            <person name="Garcia E."/>
            <person name="Tolmasky M.E."/>
        </authorList>
    </citation>
    <scope>NUCLEOTIDE SEQUENCE [LARGE SCALE GENOMIC DNA]</scope>
    <source>
        <strain>ATCC 49188 / DSM 6882 / CCUG 24695 / JCM 21032 / LMG 3331 / NBRC 15819 / NCTC 12168 / Alc 37</strain>
    </source>
</reference>
<sequence>MAERSQNLQDLFLNSVRKQKISLTIFLINGVKLTGIVTSFDNFCVLLRRDGHSQLVYKHAISTIMPSQPVQMFEGEEA</sequence>
<name>HFQ_BRUA4</name>
<feature type="chain" id="PRO_1000025923" description="RNA-binding protein Hfq">
    <location>
        <begin position="1"/>
        <end position="78"/>
    </location>
</feature>
<feature type="domain" description="Sm" evidence="2">
    <location>
        <begin position="10"/>
        <end position="70"/>
    </location>
</feature>
<protein>
    <recommendedName>
        <fullName evidence="1">RNA-binding protein Hfq</fullName>
    </recommendedName>
</protein>
<gene>
    <name evidence="1" type="primary">hfq</name>
    <name type="ordered locus">Oant_2208</name>
</gene>
<organism>
    <name type="scientific">Brucella anthropi (strain ATCC 49188 / DSM 6882 / CCUG 24695 / JCM 21032 / LMG 3331 / NBRC 15819 / NCTC 12168 / Alc 37)</name>
    <name type="common">Ochrobactrum anthropi</name>
    <dbReference type="NCBI Taxonomy" id="439375"/>
    <lineage>
        <taxon>Bacteria</taxon>
        <taxon>Pseudomonadati</taxon>
        <taxon>Pseudomonadota</taxon>
        <taxon>Alphaproteobacteria</taxon>
        <taxon>Hyphomicrobiales</taxon>
        <taxon>Brucellaceae</taxon>
        <taxon>Brucella/Ochrobactrum group</taxon>
        <taxon>Brucella</taxon>
    </lineage>
</organism>
<keyword id="KW-1185">Reference proteome</keyword>
<keyword id="KW-0694">RNA-binding</keyword>
<keyword id="KW-0346">Stress response</keyword>
<accession>A6X120</accession>